<reference key="1">
    <citation type="submission" date="2008-10" db="EMBL/GenBank/DDBJ databases">
        <title>The complete genome sequence of Helicobacter pylori strain P12.</title>
        <authorList>
            <person name="Fischer W."/>
            <person name="Windhager L."/>
            <person name="Karnholz A."/>
            <person name="Zeiller M."/>
            <person name="Zimmer R."/>
            <person name="Haas R."/>
        </authorList>
    </citation>
    <scope>NUCLEOTIDE SEQUENCE [LARGE SCALE GENOMIC DNA]</scope>
    <source>
        <strain>P12</strain>
    </source>
</reference>
<dbReference type="EMBL" id="CP001217">
    <property type="protein sequence ID" value="ACJ08269.1"/>
    <property type="molecule type" value="Genomic_DNA"/>
</dbReference>
<dbReference type="SMR" id="B6JMZ1"/>
<dbReference type="KEGG" id="hpp:HPP12_1117"/>
<dbReference type="HOGENOM" id="CLU_100590_5_1_7"/>
<dbReference type="Proteomes" id="UP000008198">
    <property type="component" value="Chromosome"/>
</dbReference>
<dbReference type="GO" id="GO:0005737">
    <property type="term" value="C:cytoplasm"/>
    <property type="evidence" value="ECO:0007669"/>
    <property type="project" value="UniProtKB-ARBA"/>
</dbReference>
<dbReference type="GO" id="GO:0015935">
    <property type="term" value="C:small ribosomal subunit"/>
    <property type="evidence" value="ECO:0007669"/>
    <property type="project" value="TreeGrafter"/>
</dbReference>
<dbReference type="GO" id="GO:0003735">
    <property type="term" value="F:structural constituent of ribosome"/>
    <property type="evidence" value="ECO:0007669"/>
    <property type="project" value="InterPro"/>
</dbReference>
<dbReference type="GO" id="GO:0006412">
    <property type="term" value="P:translation"/>
    <property type="evidence" value="ECO:0007669"/>
    <property type="project" value="UniProtKB-UniRule"/>
</dbReference>
<dbReference type="FunFam" id="3.30.1320.10:FF:000005">
    <property type="entry name" value="30S ribosomal protein S16"/>
    <property type="match status" value="1"/>
</dbReference>
<dbReference type="Gene3D" id="3.30.1320.10">
    <property type="match status" value="1"/>
</dbReference>
<dbReference type="HAMAP" id="MF_00385">
    <property type="entry name" value="Ribosomal_bS16"/>
    <property type="match status" value="1"/>
</dbReference>
<dbReference type="InterPro" id="IPR000307">
    <property type="entry name" value="Ribosomal_bS16"/>
</dbReference>
<dbReference type="InterPro" id="IPR020592">
    <property type="entry name" value="Ribosomal_bS16_CS"/>
</dbReference>
<dbReference type="InterPro" id="IPR023803">
    <property type="entry name" value="Ribosomal_bS16_dom_sf"/>
</dbReference>
<dbReference type="NCBIfam" id="TIGR00002">
    <property type="entry name" value="S16"/>
    <property type="match status" value="1"/>
</dbReference>
<dbReference type="PANTHER" id="PTHR12919">
    <property type="entry name" value="30S RIBOSOMAL PROTEIN S16"/>
    <property type="match status" value="1"/>
</dbReference>
<dbReference type="PANTHER" id="PTHR12919:SF20">
    <property type="entry name" value="SMALL RIBOSOMAL SUBUNIT PROTEIN BS16M"/>
    <property type="match status" value="1"/>
</dbReference>
<dbReference type="Pfam" id="PF00886">
    <property type="entry name" value="Ribosomal_S16"/>
    <property type="match status" value="1"/>
</dbReference>
<dbReference type="SUPFAM" id="SSF54565">
    <property type="entry name" value="Ribosomal protein S16"/>
    <property type="match status" value="1"/>
</dbReference>
<dbReference type="PROSITE" id="PS00732">
    <property type="entry name" value="RIBOSOMAL_S16"/>
    <property type="match status" value="1"/>
</dbReference>
<gene>
    <name evidence="1" type="primary">rpsP</name>
    <name type="ordered locus">HPP12_1117</name>
</gene>
<accession>B6JMZ1</accession>
<protein>
    <recommendedName>
        <fullName evidence="1">Small ribosomal subunit protein bS16</fullName>
    </recommendedName>
    <alternativeName>
        <fullName evidence="2">30S ribosomal protein S16</fullName>
    </alternativeName>
</protein>
<sequence length="76" mass="8971">MTVIRLTRIGRKKKPFYRVVVTDSRKRRDGGWIESIGYYNPLSEPKDIKIDKERLNYWKGVGAKMSERVEKLSQKA</sequence>
<comment type="similarity">
    <text evidence="1">Belongs to the bacterial ribosomal protein bS16 family.</text>
</comment>
<keyword id="KW-0687">Ribonucleoprotein</keyword>
<keyword id="KW-0689">Ribosomal protein</keyword>
<evidence type="ECO:0000255" key="1">
    <source>
        <dbReference type="HAMAP-Rule" id="MF_00385"/>
    </source>
</evidence>
<evidence type="ECO:0000305" key="2"/>
<proteinExistence type="inferred from homology"/>
<organism>
    <name type="scientific">Helicobacter pylori (strain P12)</name>
    <dbReference type="NCBI Taxonomy" id="570508"/>
    <lineage>
        <taxon>Bacteria</taxon>
        <taxon>Pseudomonadati</taxon>
        <taxon>Campylobacterota</taxon>
        <taxon>Epsilonproteobacteria</taxon>
        <taxon>Campylobacterales</taxon>
        <taxon>Helicobacteraceae</taxon>
        <taxon>Helicobacter</taxon>
    </lineage>
</organism>
<name>RS16_HELP2</name>
<feature type="chain" id="PRO_1000196416" description="Small ribosomal subunit protein bS16">
    <location>
        <begin position="1"/>
        <end position="76"/>
    </location>
</feature>